<accession>Q4L505</accession>
<keyword id="KW-0963">Cytoplasm</keyword>
<keyword id="KW-1015">Disulfide bond</keyword>
<keyword id="KW-0676">Redox-active center</keyword>
<keyword id="KW-0804">Transcription</keyword>
<keyword id="KW-0805">Transcription regulation</keyword>
<evidence type="ECO:0000255" key="1">
    <source>
        <dbReference type="HAMAP-Rule" id="MF_01132"/>
    </source>
</evidence>
<proteinExistence type="inferred from homology"/>
<protein>
    <recommendedName>
        <fullName evidence="1">Global transcriptional regulator Spx</fullName>
    </recommendedName>
</protein>
<gene>
    <name evidence="1" type="primary">spx</name>
    <name type="ordered locus">SH1961</name>
</gene>
<sequence length="131" mass="15422">MVTLFTSPSCTSCRKAKAWLQEHDIPYTERNIFSEHLTIDEIKQILKMTEDGTDEIISTRSKTYQKLNVDIDSLPLQDLYAIIQDNPGLLRRPIILDEKRLQVGYNEDEIRRFLPRKVRTFQLQEAQRLVD</sequence>
<reference key="1">
    <citation type="journal article" date="2005" name="J. Bacteriol.">
        <title>Whole-genome sequencing of Staphylococcus haemolyticus uncovers the extreme plasticity of its genome and the evolution of human-colonizing staphylococcal species.</title>
        <authorList>
            <person name="Takeuchi F."/>
            <person name="Watanabe S."/>
            <person name="Baba T."/>
            <person name="Yuzawa H."/>
            <person name="Ito T."/>
            <person name="Morimoto Y."/>
            <person name="Kuroda M."/>
            <person name="Cui L."/>
            <person name="Takahashi M."/>
            <person name="Ankai A."/>
            <person name="Baba S."/>
            <person name="Fukui S."/>
            <person name="Lee J.C."/>
            <person name="Hiramatsu K."/>
        </authorList>
    </citation>
    <scope>NUCLEOTIDE SEQUENCE [LARGE SCALE GENOMIC DNA]</scope>
    <source>
        <strain>JCSC1435</strain>
    </source>
</reference>
<name>SPX_STAHJ</name>
<organism>
    <name type="scientific">Staphylococcus haemolyticus (strain JCSC1435)</name>
    <dbReference type="NCBI Taxonomy" id="279808"/>
    <lineage>
        <taxon>Bacteria</taxon>
        <taxon>Bacillati</taxon>
        <taxon>Bacillota</taxon>
        <taxon>Bacilli</taxon>
        <taxon>Bacillales</taxon>
        <taxon>Staphylococcaceae</taxon>
        <taxon>Staphylococcus</taxon>
    </lineage>
</organism>
<comment type="function">
    <text evidence="1">Global transcriptional regulator that plays a key role in stress response and exerts either positive or negative regulation of genes. Acts by interacting with the C-terminal domain of the alpha subunit of the RNA polymerase (RNAP). This interaction can enhance binding of RNAP to the promoter region of target genes and stimulate their transcription, or block interaction of RNAP with activator.</text>
</comment>
<comment type="subunit">
    <text evidence="1">Interacts with the C-terminal domain of the alpha subunit of the RNAP.</text>
</comment>
<comment type="subcellular location">
    <subcellularLocation>
        <location evidence="1">Cytoplasm</location>
    </subcellularLocation>
</comment>
<comment type="similarity">
    <text evidence="1">Belongs to the ArsC family. Spx subfamily.</text>
</comment>
<feature type="chain" id="PRO_0000162570" description="Global transcriptional regulator Spx">
    <location>
        <begin position="1"/>
        <end position="131"/>
    </location>
</feature>
<feature type="disulfide bond" description="Redox-active" evidence="1">
    <location>
        <begin position="10"/>
        <end position="13"/>
    </location>
</feature>
<dbReference type="EMBL" id="AP006716">
    <property type="protein sequence ID" value="BAE05270.1"/>
    <property type="molecule type" value="Genomic_DNA"/>
</dbReference>
<dbReference type="SMR" id="Q4L505"/>
<dbReference type="KEGG" id="sha:SH1961"/>
<dbReference type="eggNOG" id="COG1393">
    <property type="taxonomic scope" value="Bacteria"/>
</dbReference>
<dbReference type="HOGENOM" id="CLU_116644_1_1_9"/>
<dbReference type="OrthoDB" id="9794155at2"/>
<dbReference type="Proteomes" id="UP000000543">
    <property type="component" value="Chromosome"/>
</dbReference>
<dbReference type="GO" id="GO:0005737">
    <property type="term" value="C:cytoplasm"/>
    <property type="evidence" value="ECO:0007669"/>
    <property type="project" value="UniProtKB-SubCell"/>
</dbReference>
<dbReference type="GO" id="GO:0045892">
    <property type="term" value="P:negative regulation of DNA-templated transcription"/>
    <property type="evidence" value="ECO:0007669"/>
    <property type="project" value="InterPro"/>
</dbReference>
<dbReference type="CDD" id="cd03032">
    <property type="entry name" value="ArsC_Spx"/>
    <property type="match status" value="1"/>
</dbReference>
<dbReference type="Gene3D" id="3.40.30.10">
    <property type="entry name" value="Glutaredoxin"/>
    <property type="match status" value="1"/>
</dbReference>
<dbReference type="HAMAP" id="MF_01132">
    <property type="entry name" value="Spx"/>
    <property type="match status" value="1"/>
</dbReference>
<dbReference type="InterPro" id="IPR006660">
    <property type="entry name" value="Arsenate_reductase-like"/>
</dbReference>
<dbReference type="InterPro" id="IPR023731">
    <property type="entry name" value="Spx"/>
</dbReference>
<dbReference type="InterPro" id="IPR036249">
    <property type="entry name" value="Thioredoxin-like_sf"/>
</dbReference>
<dbReference type="InterPro" id="IPR006504">
    <property type="entry name" value="Tscrpt_reg_Spx/MgsR"/>
</dbReference>
<dbReference type="NCBIfam" id="TIGR01617">
    <property type="entry name" value="arsC_related"/>
    <property type="match status" value="1"/>
</dbReference>
<dbReference type="NCBIfam" id="NF002459">
    <property type="entry name" value="PRK01655.1"/>
    <property type="match status" value="1"/>
</dbReference>
<dbReference type="NCBIfam" id="NF009210">
    <property type="entry name" value="PRK12559.1"/>
    <property type="match status" value="1"/>
</dbReference>
<dbReference type="PANTHER" id="PTHR30041">
    <property type="entry name" value="ARSENATE REDUCTASE"/>
    <property type="match status" value="1"/>
</dbReference>
<dbReference type="PANTHER" id="PTHR30041:SF7">
    <property type="entry name" value="GLOBAL TRANSCRIPTIONAL REGULATOR SPX"/>
    <property type="match status" value="1"/>
</dbReference>
<dbReference type="Pfam" id="PF03960">
    <property type="entry name" value="ArsC"/>
    <property type="match status" value="1"/>
</dbReference>
<dbReference type="SUPFAM" id="SSF52833">
    <property type="entry name" value="Thioredoxin-like"/>
    <property type="match status" value="1"/>
</dbReference>
<dbReference type="PROSITE" id="PS51353">
    <property type="entry name" value="ARSC"/>
    <property type="match status" value="1"/>
</dbReference>